<gene>
    <name evidence="1" type="primary">ligA</name>
    <name type="ordered locus">APL_1302</name>
</gene>
<organism>
    <name type="scientific">Actinobacillus pleuropneumoniae serotype 5b (strain L20)</name>
    <dbReference type="NCBI Taxonomy" id="416269"/>
    <lineage>
        <taxon>Bacteria</taxon>
        <taxon>Pseudomonadati</taxon>
        <taxon>Pseudomonadota</taxon>
        <taxon>Gammaproteobacteria</taxon>
        <taxon>Pasteurellales</taxon>
        <taxon>Pasteurellaceae</taxon>
        <taxon>Actinobacillus</taxon>
    </lineage>
</organism>
<feature type="chain" id="PRO_0000313103" description="DNA ligase">
    <location>
        <begin position="1"/>
        <end position="683"/>
    </location>
</feature>
<feature type="domain" description="BRCT" evidence="1">
    <location>
        <begin position="604"/>
        <end position="683"/>
    </location>
</feature>
<feature type="active site" description="N6-AMP-lysine intermediate" evidence="1">
    <location>
        <position position="127"/>
    </location>
</feature>
<feature type="binding site" evidence="1">
    <location>
        <begin position="43"/>
        <end position="47"/>
    </location>
    <ligand>
        <name>NAD(+)</name>
        <dbReference type="ChEBI" id="CHEBI:57540"/>
    </ligand>
</feature>
<feature type="binding site" evidence="1">
    <location>
        <begin position="92"/>
        <end position="93"/>
    </location>
    <ligand>
        <name>NAD(+)</name>
        <dbReference type="ChEBI" id="CHEBI:57540"/>
    </ligand>
</feature>
<feature type="binding site" evidence="1">
    <location>
        <position position="125"/>
    </location>
    <ligand>
        <name>NAD(+)</name>
        <dbReference type="ChEBI" id="CHEBI:57540"/>
    </ligand>
</feature>
<feature type="binding site" evidence="1">
    <location>
        <position position="148"/>
    </location>
    <ligand>
        <name>NAD(+)</name>
        <dbReference type="ChEBI" id="CHEBI:57540"/>
    </ligand>
</feature>
<feature type="binding site" evidence="1">
    <location>
        <position position="185"/>
    </location>
    <ligand>
        <name>NAD(+)</name>
        <dbReference type="ChEBI" id="CHEBI:57540"/>
    </ligand>
</feature>
<feature type="binding site" evidence="1">
    <location>
        <position position="303"/>
    </location>
    <ligand>
        <name>NAD(+)</name>
        <dbReference type="ChEBI" id="CHEBI:57540"/>
    </ligand>
</feature>
<feature type="binding site" evidence="1">
    <location>
        <position position="327"/>
    </location>
    <ligand>
        <name>NAD(+)</name>
        <dbReference type="ChEBI" id="CHEBI:57540"/>
    </ligand>
</feature>
<feature type="binding site" evidence="1">
    <location>
        <position position="421"/>
    </location>
    <ligand>
        <name>Zn(2+)</name>
        <dbReference type="ChEBI" id="CHEBI:29105"/>
    </ligand>
</feature>
<feature type="binding site" evidence="1">
    <location>
        <position position="424"/>
    </location>
    <ligand>
        <name>Zn(2+)</name>
        <dbReference type="ChEBI" id="CHEBI:29105"/>
    </ligand>
</feature>
<feature type="binding site" evidence="1">
    <location>
        <position position="439"/>
    </location>
    <ligand>
        <name>Zn(2+)</name>
        <dbReference type="ChEBI" id="CHEBI:29105"/>
    </ligand>
</feature>
<feature type="binding site" evidence="1">
    <location>
        <position position="445"/>
    </location>
    <ligand>
        <name>Zn(2+)</name>
        <dbReference type="ChEBI" id="CHEBI:29105"/>
    </ligand>
</feature>
<sequence>MPLLSQMQEYQADTTFAQLEALRQKLREYEYHYHVLDNPLVPDAEYDRLMNELKNLEWQHPEWITVDSPTQRVGAKPLDGFAQVTHEIPMLSLDNAFSDEELDGFLRRMESYITEDPHTLAFCCEPKLDGLAVSILYVDGVLSQAATRGDGSTGEDITSNIRTIRNIPLKLNMDNPPARLEVRGEVFMPQKGFEELNERALEKGEKTFANPRNAAAGSLRQLDPKITRQRPLVLNAYGIGVYESDDELPATHFERLQWLKSIGIPVNNEIRLATGREQLLAFYANIQAKRPTLGYDIDGTVLKVNDIGLQEQLGFISRSPRWAIAYKFPSQEEMTVLNDVEFQVGRTGAITPVAKLEPVFVAGVTVSNATLHNGDEIERLGIVIGDTVIIRRAGDVIPQIVGVVMDRRPENAKKIEFPTACPVCESAVVRVEGEAVARCTGGLFCGAQRKEALKHFVSRKAMDIDGVGEKLIEQLMERELVHTPADLFKLDHTTLMRLERMGEKSAQNALNSIEKAKNTTLARFLFALGIRDVGEATAQNLANHFHNLAAIRTATFEQLQAVQDVGEVVANRIVRFWQEPHNVAVVEDLISQGVHWQDVIQVEIADNPLKGKNVVLTGTLTQLTRDQAKALLQSFGCKVSGSVSSKTDYLIAGEKAGSKLAKAQELGVKILTEQEFIALTGEN</sequence>
<reference key="1">
    <citation type="journal article" date="2008" name="J. Bacteriol.">
        <title>The complete genome sequence of Actinobacillus pleuropneumoniae L20 (serotype 5b).</title>
        <authorList>
            <person name="Foote S.J."/>
            <person name="Bosse J.T."/>
            <person name="Bouevitch A.B."/>
            <person name="Langford P.R."/>
            <person name="Young N.M."/>
            <person name="Nash J.H.E."/>
        </authorList>
    </citation>
    <scope>NUCLEOTIDE SEQUENCE [LARGE SCALE GENOMIC DNA]</scope>
    <source>
        <strain>L20</strain>
    </source>
</reference>
<keyword id="KW-0227">DNA damage</keyword>
<keyword id="KW-0234">DNA repair</keyword>
<keyword id="KW-0235">DNA replication</keyword>
<keyword id="KW-0436">Ligase</keyword>
<keyword id="KW-0460">Magnesium</keyword>
<keyword id="KW-0464">Manganese</keyword>
<keyword id="KW-0479">Metal-binding</keyword>
<keyword id="KW-0520">NAD</keyword>
<keyword id="KW-1185">Reference proteome</keyword>
<keyword id="KW-0862">Zinc</keyword>
<accession>A3N1V2</accession>
<dbReference type="EC" id="6.5.1.2" evidence="1"/>
<dbReference type="EMBL" id="CP000569">
    <property type="protein sequence ID" value="ABN74388.1"/>
    <property type="molecule type" value="Genomic_DNA"/>
</dbReference>
<dbReference type="RefSeq" id="WP_009875367.1">
    <property type="nucleotide sequence ID" value="NC_009053.1"/>
</dbReference>
<dbReference type="SMR" id="A3N1V2"/>
<dbReference type="STRING" id="416269.APL_1302"/>
<dbReference type="EnsemblBacteria" id="ABN74388">
    <property type="protein sequence ID" value="ABN74388"/>
    <property type="gene ID" value="APL_1302"/>
</dbReference>
<dbReference type="KEGG" id="apl:APL_1302"/>
<dbReference type="PATRIC" id="fig|416269.6.peg.1359"/>
<dbReference type="eggNOG" id="COG0272">
    <property type="taxonomic scope" value="Bacteria"/>
</dbReference>
<dbReference type="HOGENOM" id="CLU_007764_2_1_6"/>
<dbReference type="Proteomes" id="UP000001432">
    <property type="component" value="Chromosome"/>
</dbReference>
<dbReference type="GO" id="GO:0005829">
    <property type="term" value="C:cytosol"/>
    <property type="evidence" value="ECO:0007669"/>
    <property type="project" value="TreeGrafter"/>
</dbReference>
<dbReference type="GO" id="GO:0003677">
    <property type="term" value="F:DNA binding"/>
    <property type="evidence" value="ECO:0007669"/>
    <property type="project" value="InterPro"/>
</dbReference>
<dbReference type="GO" id="GO:0003911">
    <property type="term" value="F:DNA ligase (NAD+) activity"/>
    <property type="evidence" value="ECO:0007669"/>
    <property type="project" value="UniProtKB-UniRule"/>
</dbReference>
<dbReference type="GO" id="GO:0046872">
    <property type="term" value="F:metal ion binding"/>
    <property type="evidence" value="ECO:0007669"/>
    <property type="project" value="UniProtKB-KW"/>
</dbReference>
<dbReference type="GO" id="GO:0006281">
    <property type="term" value="P:DNA repair"/>
    <property type="evidence" value="ECO:0007669"/>
    <property type="project" value="UniProtKB-KW"/>
</dbReference>
<dbReference type="GO" id="GO:0006260">
    <property type="term" value="P:DNA replication"/>
    <property type="evidence" value="ECO:0007669"/>
    <property type="project" value="UniProtKB-KW"/>
</dbReference>
<dbReference type="CDD" id="cd17748">
    <property type="entry name" value="BRCT_DNA_ligase_like"/>
    <property type="match status" value="1"/>
</dbReference>
<dbReference type="CDD" id="cd00114">
    <property type="entry name" value="LIGANc"/>
    <property type="match status" value="1"/>
</dbReference>
<dbReference type="FunFam" id="1.10.150.20:FF:000006">
    <property type="entry name" value="DNA ligase"/>
    <property type="match status" value="1"/>
</dbReference>
<dbReference type="FunFam" id="1.10.150.20:FF:000007">
    <property type="entry name" value="DNA ligase"/>
    <property type="match status" value="1"/>
</dbReference>
<dbReference type="FunFam" id="1.10.287.610:FF:000002">
    <property type="entry name" value="DNA ligase"/>
    <property type="match status" value="1"/>
</dbReference>
<dbReference type="FunFam" id="2.40.50.140:FF:000012">
    <property type="entry name" value="DNA ligase"/>
    <property type="match status" value="1"/>
</dbReference>
<dbReference type="FunFam" id="3.30.470.30:FF:000001">
    <property type="entry name" value="DNA ligase"/>
    <property type="match status" value="1"/>
</dbReference>
<dbReference type="FunFam" id="3.40.50.10190:FF:000054">
    <property type="entry name" value="DNA ligase"/>
    <property type="match status" value="1"/>
</dbReference>
<dbReference type="FunFam" id="6.20.10.30:FF:000001">
    <property type="entry name" value="DNA ligase"/>
    <property type="match status" value="1"/>
</dbReference>
<dbReference type="Gene3D" id="6.20.10.30">
    <property type="match status" value="1"/>
</dbReference>
<dbReference type="Gene3D" id="1.10.150.20">
    <property type="entry name" value="5' to 3' exonuclease, C-terminal subdomain"/>
    <property type="match status" value="2"/>
</dbReference>
<dbReference type="Gene3D" id="3.40.50.10190">
    <property type="entry name" value="BRCT domain"/>
    <property type="match status" value="1"/>
</dbReference>
<dbReference type="Gene3D" id="3.30.470.30">
    <property type="entry name" value="DNA ligase/mRNA capping enzyme"/>
    <property type="match status" value="1"/>
</dbReference>
<dbReference type="Gene3D" id="1.10.287.610">
    <property type="entry name" value="Helix hairpin bin"/>
    <property type="match status" value="1"/>
</dbReference>
<dbReference type="Gene3D" id="2.40.50.140">
    <property type="entry name" value="Nucleic acid-binding proteins"/>
    <property type="match status" value="1"/>
</dbReference>
<dbReference type="HAMAP" id="MF_01588">
    <property type="entry name" value="DNA_ligase_A"/>
    <property type="match status" value="1"/>
</dbReference>
<dbReference type="InterPro" id="IPR001357">
    <property type="entry name" value="BRCT_dom"/>
</dbReference>
<dbReference type="InterPro" id="IPR036420">
    <property type="entry name" value="BRCT_dom_sf"/>
</dbReference>
<dbReference type="InterPro" id="IPR041663">
    <property type="entry name" value="DisA/LigA_HHH"/>
</dbReference>
<dbReference type="InterPro" id="IPR001679">
    <property type="entry name" value="DNA_ligase"/>
</dbReference>
<dbReference type="InterPro" id="IPR018239">
    <property type="entry name" value="DNA_ligase_AS"/>
</dbReference>
<dbReference type="InterPro" id="IPR033136">
    <property type="entry name" value="DNA_ligase_CS"/>
</dbReference>
<dbReference type="InterPro" id="IPR013839">
    <property type="entry name" value="DNAligase_adenylation"/>
</dbReference>
<dbReference type="InterPro" id="IPR013840">
    <property type="entry name" value="DNAligase_N"/>
</dbReference>
<dbReference type="InterPro" id="IPR003583">
    <property type="entry name" value="Hlx-hairpin-Hlx_DNA-bd_motif"/>
</dbReference>
<dbReference type="InterPro" id="IPR012340">
    <property type="entry name" value="NA-bd_OB-fold"/>
</dbReference>
<dbReference type="InterPro" id="IPR004150">
    <property type="entry name" value="NAD_DNA_ligase_OB"/>
</dbReference>
<dbReference type="InterPro" id="IPR010994">
    <property type="entry name" value="RuvA_2-like"/>
</dbReference>
<dbReference type="InterPro" id="IPR004149">
    <property type="entry name" value="Znf_DNAligase_C4"/>
</dbReference>
<dbReference type="NCBIfam" id="TIGR00575">
    <property type="entry name" value="dnlj"/>
    <property type="match status" value="1"/>
</dbReference>
<dbReference type="NCBIfam" id="NF005932">
    <property type="entry name" value="PRK07956.1"/>
    <property type="match status" value="1"/>
</dbReference>
<dbReference type="PANTHER" id="PTHR23389">
    <property type="entry name" value="CHROMOSOME TRANSMISSION FIDELITY FACTOR 18"/>
    <property type="match status" value="1"/>
</dbReference>
<dbReference type="PANTHER" id="PTHR23389:SF9">
    <property type="entry name" value="DNA LIGASE"/>
    <property type="match status" value="1"/>
</dbReference>
<dbReference type="Pfam" id="PF00533">
    <property type="entry name" value="BRCT"/>
    <property type="match status" value="1"/>
</dbReference>
<dbReference type="Pfam" id="PF01653">
    <property type="entry name" value="DNA_ligase_aden"/>
    <property type="match status" value="1"/>
</dbReference>
<dbReference type="Pfam" id="PF03120">
    <property type="entry name" value="DNA_ligase_OB"/>
    <property type="match status" value="1"/>
</dbReference>
<dbReference type="Pfam" id="PF03119">
    <property type="entry name" value="DNA_ligase_ZBD"/>
    <property type="match status" value="1"/>
</dbReference>
<dbReference type="Pfam" id="PF12826">
    <property type="entry name" value="HHH_2"/>
    <property type="match status" value="1"/>
</dbReference>
<dbReference type="Pfam" id="PF14520">
    <property type="entry name" value="HHH_5"/>
    <property type="match status" value="1"/>
</dbReference>
<dbReference type="PIRSF" id="PIRSF001604">
    <property type="entry name" value="LigA"/>
    <property type="match status" value="1"/>
</dbReference>
<dbReference type="SMART" id="SM00292">
    <property type="entry name" value="BRCT"/>
    <property type="match status" value="1"/>
</dbReference>
<dbReference type="SMART" id="SM00278">
    <property type="entry name" value="HhH1"/>
    <property type="match status" value="4"/>
</dbReference>
<dbReference type="SMART" id="SM00532">
    <property type="entry name" value="LIGANc"/>
    <property type="match status" value="1"/>
</dbReference>
<dbReference type="SUPFAM" id="SSF52113">
    <property type="entry name" value="BRCT domain"/>
    <property type="match status" value="1"/>
</dbReference>
<dbReference type="SUPFAM" id="SSF56091">
    <property type="entry name" value="DNA ligase/mRNA capping enzyme, catalytic domain"/>
    <property type="match status" value="1"/>
</dbReference>
<dbReference type="SUPFAM" id="SSF50249">
    <property type="entry name" value="Nucleic acid-binding proteins"/>
    <property type="match status" value="1"/>
</dbReference>
<dbReference type="SUPFAM" id="SSF47781">
    <property type="entry name" value="RuvA domain 2-like"/>
    <property type="match status" value="1"/>
</dbReference>
<dbReference type="PROSITE" id="PS50172">
    <property type="entry name" value="BRCT"/>
    <property type="match status" value="1"/>
</dbReference>
<dbReference type="PROSITE" id="PS01055">
    <property type="entry name" value="DNA_LIGASE_N1"/>
    <property type="match status" value="1"/>
</dbReference>
<dbReference type="PROSITE" id="PS01056">
    <property type="entry name" value="DNA_LIGASE_N2"/>
    <property type="match status" value="1"/>
</dbReference>
<proteinExistence type="inferred from homology"/>
<comment type="function">
    <text evidence="1">DNA ligase that catalyzes the formation of phosphodiester linkages between 5'-phosphoryl and 3'-hydroxyl groups in double-stranded DNA using NAD as a coenzyme and as the energy source for the reaction. It is essential for DNA replication and repair of damaged DNA.</text>
</comment>
<comment type="catalytic activity">
    <reaction evidence="1">
        <text>NAD(+) + (deoxyribonucleotide)n-3'-hydroxyl + 5'-phospho-(deoxyribonucleotide)m = (deoxyribonucleotide)n+m + AMP + beta-nicotinamide D-nucleotide.</text>
        <dbReference type="EC" id="6.5.1.2"/>
    </reaction>
</comment>
<comment type="cofactor">
    <cofactor evidence="1">
        <name>Mg(2+)</name>
        <dbReference type="ChEBI" id="CHEBI:18420"/>
    </cofactor>
    <cofactor evidence="1">
        <name>Mn(2+)</name>
        <dbReference type="ChEBI" id="CHEBI:29035"/>
    </cofactor>
</comment>
<comment type="similarity">
    <text evidence="1">Belongs to the NAD-dependent DNA ligase family. LigA subfamily.</text>
</comment>
<name>DNLJ_ACTP2</name>
<protein>
    <recommendedName>
        <fullName evidence="1">DNA ligase</fullName>
        <ecNumber evidence="1">6.5.1.2</ecNumber>
    </recommendedName>
    <alternativeName>
        <fullName evidence="1">Polydeoxyribonucleotide synthase [NAD(+)]</fullName>
    </alternativeName>
</protein>
<evidence type="ECO:0000255" key="1">
    <source>
        <dbReference type="HAMAP-Rule" id="MF_01588"/>
    </source>
</evidence>